<reference key="1">
    <citation type="submission" date="2007-02" db="EMBL/GenBank/DDBJ databases">
        <title>Complete sequence of Clostridium thermocellum ATCC 27405.</title>
        <authorList>
            <consortium name="US DOE Joint Genome Institute"/>
            <person name="Copeland A."/>
            <person name="Lucas S."/>
            <person name="Lapidus A."/>
            <person name="Barry K."/>
            <person name="Detter J.C."/>
            <person name="Glavina del Rio T."/>
            <person name="Hammon N."/>
            <person name="Israni S."/>
            <person name="Dalin E."/>
            <person name="Tice H."/>
            <person name="Pitluck S."/>
            <person name="Chertkov O."/>
            <person name="Brettin T."/>
            <person name="Bruce D."/>
            <person name="Han C."/>
            <person name="Tapia R."/>
            <person name="Gilna P."/>
            <person name="Schmutz J."/>
            <person name="Larimer F."/>
            <person name="Land M."/>
            <person name="Hauser L."/>
            <person name="Kyrpides N."/>
            <person name="Mikhailova N."/>
            <person name="Wu J.H.D."/>
            <person name="Newcomb M."/>
            <person name="Richardson P."/>
        </authorList>
    </citation>
    <scope>NUCLEOTIDE SEQUENCE [LARGE SCALE GENOMIC DNA]</scope>
    <source>
        <strain>ATCC 27405 / DSM 1237 / JCM 9322 / NBRC 103400 / NCIMB 10682 / NRRL B-4536 / VPI 7372</strain>
    </source>
</reference>
<sequence length="793" mass="88690">MNEKTLKILEFNKIIDKLVSLATSSLGKELAEKLVPDTDLNRVERAQKETSDAVAFIARRGTPPMGGIHDIRDSLKRVEIGAILNPGELLKTADVLRAVRNLKSYASNDRIKTDEDNIVSELIGCLESNKRIEDRIYMSILSEDEIADNASPTLANIRRQIRNAQESIKDKLNDIIRSSRYQKYIQEPIVTLRGDRYVIPVKQEYRTEIPGLIHDSSASGATIFIEPMAVVEANNHIRELKIKEQAEIEKILGELTGEIRGIVDSLKSNVSILGRLDFIFAKARLSLDYNCVCPVLNDEHKILIKKGRHPLLDKKTVVPIDFWIGEDFNTLVVTGPNTGGKTVTLKTVGLFTLMTQAGLHIPANEGTKMSIFKKVYADIGDEQSIEQSLSTFSSHMKNIVGILKDVDEDSLVLFDELGAGTDPTEGAALAMSILEYLRNKGSTTVATTHYSQLKAYAVTTKFVENACCEFNVETLRPTYRLLIGVPGKSNAFAISKRLGLFDDIIEKAKEFLTQDDIKFEDMLMSIEKNLNQSENEKMKAESYRLEAEKLKKELEEQKRKLAENRERLIQEARAEARKILLEARKEAEEIISKMRRLEQEVHNAQRQKEAEELRLKLKRKVDSIEETLELPLAPKNALVKPPENLKPGDSVLIVNLDQKGTVITPPDKDGEVVVQAGIMKINVHISNLKLVDEQKIVLNNSGIGKIGMSKAKSISTEIDVRGYNLEEAIESVDKYLDDAYLSGLTEVSIIHGKGTGVLRSGIQKFLKSDSRVKSFRLGKYGEGESGVTIVELR</sequence>
<dbReference type="EC" id="3.1.-.-" evidence="1"/>
<dbReference type="EC" id="3.6.4.-" evidence="1"/>
<dbReference type="EMBL" id="CP000568">
    <property type="protein sequence ID" value="ABN52246.1"/>
    <property type="molecule type" value="Genomic_DNA"/>
</dbReference>
<dbReference type="RefSeq" id="WP_004463478.1">
    <property type="nucleotide sequence ID" value="NC_009012.1"/>
</dbReference>
<dbReference type="SMR" id="A3DE67"/>
<dbReference type="STRING" id="203119.Cthe_1014"/>
<dbReference type="GeneID" id="35803083"/>
<dbReference type="KEGG" id="cth:Cthe_1014"/>
<dbReference type="eggNOG" id="COG1193">
    <property type="taxonomic scope" value="Bacteria"/>
</dbReference>
<dbReference type="HOGENOM" id="CLU_011252_2_1_9"/>
<dbReference type="OrthoDB" id="9808166at2"/>
<dbReference type="Proteomes" id="UP000002145">
    <property type="component" value="Chromosome"/>
</dbReference>
<dbReference type="GO" id="GO:0005524">
    <property type="term" value="F:ATP binding"/>
    <property type="evidence" value="ECO:0007669"/>
    <property type="project" value="UniProtKB-UniRule"/>
</dbReference>
<dbReference type="GO" id="GO:0016887">
    <property type="term" value="F:ATP hydrolysis activity"/>
    <property type="evidence" value="ECO:0007669"/>
    <property type="project" value="InterPro"/>
</dbReference>
<dbReference type="GO" id="GO:0140664">
    <property type="term" value="F:ATP-dependent DNA damage sensor activity"/>
    <property type="evidence" value="ECO:0007669"/>
    <property type="project" value="InterPro"/>
</dbReference>
<dbReference type="GO" id="GO:0004519">
    <property type="term" value="F:endonuclease activity"/>
    <property type="evidence" value="ECO:0007669"/>
    <property type="project" value="UniProtKB-UniRule"/>
</dbReference>
<dbReference type="GO" id="GO:0030983">
    <property type="term" value="F:mismatched DNA binding"/>
    <property type="evidence" value="ECO:0007669"/>
    <property type="project" value="InterPro"/>
</dbReference>
<dbReference type="GO" id="GO:0043023">
    <property type="term" value="F:ribosomal large subunit binding"/>
    <property type="evidence" value="ECO:0007669"/>
    <property type="project" value="UniProtKB-UniRule"/>
</dbReference>
<dbReference type="GO" id="GO:0019843">
    <property type="term" value="F:rRNA binding"/>
    <property type="evidence" value="ECO:0007669"/>
    <property type="project" value="UniProtKB-UniRule"/>
</dbReference>
<dbReference type="GO" id="GO:0006298">
    <property type="term" value="P:mismatch repair"/>
    <property type="evidence" value="ECO:0007669"/>
    <property type="project" value="InterPro"/>
</dbReference>
<dbReference type="GO" id="GO:0045910">
    <property type="term" value="P:negative regulation of DNA recombination"/>
    <property type="evidence" value="ECO:0007669"/>
    <property type="project" value="InterPro"/>
</dbReference>
<dbReference type="GO" id="GO:0072344">
    <property type="term" value="P:rescue of stalled ribosome"/>
    <property type="evidence" value="ECO:0007669"/>
    <property type="project" value="UniProtKB-UniRule"/>
</dbReference>
<dbReference type="CDD" id="cd03280">
    <property type="entry name" value="ABC_MutS2"/>
    <property type="match status" value="1"/>
</dbReference>
<dbReference type="CDD" id="cd06503">
    <property type="entry name" value="ATP-synt_Fo_b"/>
    <property type="match status" value="1"/>
</dbReference>
<dbReference type="FunFam" id="3.40.50.300:FF:000830">
    <property type="entry name" value="Endonuclease MutS2"/>
    <property type="match status" value="1"/>
</dbReference>
<dbReference type="Gene3D" id="3.30.1370.110">
    <property type="match status" value="1"/>
</dbReference>
<dbReference type="Gene3D" id="3.40.50.300">
    <property type="entry name" value="P-loop containing nucleotide triphosphate hydrolases"/>
    <property type="match status" value="1"/>
</dbReference>
<dbReference type="HAMAP" id="MF_00092">
    <property type="entry name" value="MutS2"/>
    <property type="match status" value="1"/>
</dbReference>
<dbReference type="InterPro" id="IPR000432">
    <property type="entry name" value="DNA_mismatch_repair_MutS_C"/>
</dbReference>
<dbReference type="InterPro" id="IPR007696">
    <property type="entry name" value="DNA_mismatch_repair_MutS_core"/>
</dbReference>
<dbReference type="InterPro" id="IPR036187">
    <property type="entry name" value="DNA_mismatch_repair_MutS_sf"/>
</dbReference>
<dbReference type="InterPro" id="IPR046893">
    <property type="entry name" value="MSSS"/>
</dbReference>
<dbReference type="InterPro" id="IPR045076">
    <property type="entry name" value="MutS"/>
</dbReference>
<dbReference type="InterPro" id="IPR005747">
    <property type="entry name" value="MutS2"/>
</dbReference>
<dbReference type="InterPro" id="IPR027417">
    <property type="entry name" value="P-loop_NTPase"/>
</dbReference>
<dbReference type="InterPro" id="IPR002625">
    <property type="entry name" value="Smr_dom"/>
</dbReference>
<dbReference type="InterPro" id="IPR036063">
    <property type="entry name" value="Smr_dom_sf"/>
</dbReference>
<dbReference type="NCBIfam" id="TIGR01069">
    <property type="entry name" value="mutS2"/>
    <property type="match status" value="1"/>
</dbReference>
<dbReference type="PANTHER" id="PTHR48466:SF2">
    <property type="entry name" value="OS10G0509000 PROTEIN"/>
    <property type="match status" value="1"/>
</dbReference>
<dbReference type="PANTHER" id="PTHR48466">
    <property type="entry name" value="OS10G0509000 PROTEIN-RELATED"/>
    <property type="match status" value="1"/>
</dbReference>
<dbReference type="Pfam" id="PF20297">
    <property type="entry name" value="MSSS"/>
    <property type="match status" value="1"/>
</dbReference>
<dbReference type="Pfam" id="PF00488">
    <property type="entry name" value="MutS_V"/>
    <property type="match status" value="1"/>
</dbReference>
<dbReference type="Pfam" id="PF01713">
    <property type="entry name" value="Smr"/>
    <property type="match status" value="1"/>
</dbReference>
<dbReference type="PIRSF" id="PIRSF005814">
    <property type="entry name" value="MutS_YshD"/>
    <property type="match status" value="1"/>
</dbReference>
<dbReference type="SMART" id="SM00534">
    <property type="entry name" value="MUTSac"/>
    <property type="match status" value="1"/>
</dbReference>
<dbReference type="SMART" id="SM00533">
    <property type="entry name" value="MUTSd"/>
    <property type="match status" value="1"/>
</dbReference>
<dbReference type="SMART" id="SM00463">
    <property type="entry name" value="SMR"/>
    <property type="match status" value="1"/>
</dbReference>
<dbReference type="SUPFAM" id="SSF48334">
    <property type="entry name" value="DNA repair protein MutS, domain III"/>
    <property type="match status" value="1"/>
</dbReference>
<dbReference type="SUPFAM" id="SSF52540">
    <property type="entry name" value="P-loop containing nucleoside triphosphate hydrolases"/>
    <property type="match status" value="1"/>
</dbReference>
<dbReference type="SUPFAM" id="SSF160443">
    <property type="entry name" value="SMR domain-like"/>
    <property type="match status" value="1"/>
</dbReference>
<dbReference type="PROSITE" id="PS00486">
    <property type="entry name" value="DNA_MISMATCH_REPAIR_2"/>
    <property type="match status" value="1"/>
</dbReference>
<dbReference type="PROSITE" id="PS50828">
    <property type="entry name" value="SMR"/>
    <property type="match status" value="1"/>
</dbReference>
<organism>
    <name type="scientific">Acetivibrio thermocellus (strain ATCC 27405 / DSM 1237 / JCM 9322 / NBRC 103400 / NCIMB 10682 / NRRL B-4536 / VPI 7372)</name>
    <name type="common">Clostridium thermocellum</name>
    <dbReference type="NCBI Taxonomy" id="203119"/>
    <lineage>
        <taxon>Bacteria</taxon>
        <taxon>Bacillati</taxon>
        <taxon>Bacillota</taxon>
        <taxon>Clostridia</taxon>
        <taxon>Eubacteriales</taxon>
        <taxon>Oscillospiraceae</taxon>
        <taxon>Acetivibrio</taxon>
    </lineage>
</organism>
<protein>
    <recommendedName>
        <fullName evidence="1">Endonuclease MutS2</fullName>
        <ecNumber evidence="1">3.1.-.-</ecNumber>
    </recommendedName>
    <alternativeName>
        <fullName evidence="1">Ribosome-associated protein quality control-upstream factor</fullName>
        <shortName evidence="1">RQC-upstream factor</shortName>
        <shortName evidence="1">RqcU</shortName>
        <ecNumber evidence="1">3.6.4.-</ecNumber>
    </alternativeName>
</protein>
<accession>A3DE67</accession>
<proteinExistence type="inferred from homology"/>
<evidence type="ECO:0000255" key="1">
    <source>
        <dbReference type="HAMAP-Rule" id="MF_00092"/>
    </source>
</evidence>
<name>MUTS2_ACET2</name>
<gene>
    <name evidence="1" type="primary">mutS2</name>
    <name evidence="1" type="synonym">rqcU</name>
    <name type="ordered locus">Cthe_1014</name>
</gene>
<keyword id="KW-0067">ATP-binding</keyword>
<keyword id="KW-0238">DNA-binding</keyword>
<keyword id="KW-0255">Endonuclease</keyword>
<keyword id="KW-0378">Hydrolase</keyword>
<keyword id="KW-0540">Nuclease</keyword>
<keyword id="KW-0547">Nucleotide-binding</keyword>
<keyword id="KW-1185">Reference proteome</keyword>
<keyword id="KW-0694">RNA-binding</keyword>
<keyword id="KW-0699">rRNA-binding</keyword>
<comment type="function">
    <text evidence="1">Endonuclease that is involved in the suppression of homologous recombination and thus may have a key role in the control of bacterial genetic diversity.</text>
</comment>
<comment type="function">
    <text evidence="1">Acts as a ribosome collision sensor, splitting the ribosome into its 2 subunits. Detects stalled/collided 70S ribosomes which it binds and splits by an ATP-hydrolysis driven conformational change. Acts upstream of the ribosome quality control system (RQC), a ribosome-associated complex that mediates the extraction of incompletely synthesized nascent chains from stalled ribosomes and their subsequent degradation. Probably generates substrates for RQC.</text>
</comment>
<comment type="subunit">
    <text evidence="1">Homodimer. Binds to stalled ribosomes, contacting rRNA.</text>
</comment>
<comment type="similarity">
    <text evidence="1">Belongs to the DNA mismatch repair MutS family. MutS2 subfamily.</text>
</comment>
<feature type="chain" id="PRO_1000093356" description="Endonuclease MutS2">
    <location>
        <begin position="1"/>
        <end position="793"/>
    </location>
</feature>
<feature type="domain" description="Smr" evidence="1">
    <location>
        <begin position="718"/>
        <end position="793"/>
    </location>
</feature>
<feature type="binding site" evidence="1">
    <location>
        <begin position="335"/>
        <end position="342"/>
    </location>
    <ligand>
        <name>ATP</name>
        <dbReference type="ChEBI" id="CHEBI:30616"/>
    </ligand>
</feature>